<evidence type="ECO:0000255" key="1">
    <source>
        <dbReference type="HAMAP-Rule" id="MF_01342"/>
    </source>
</evidence>
<evidence type="ECO:0000305" key="2"/>
<organism>
    <name type="scientific">Ligilactobacillus salivarius (strain UCC118)</name>
    <name type="common">Lactobacillus salivarius</name>
    <dbReference type="NCBI Taxonomy" id="362948"/>
    <lineage>
        <taxon>Bacteria</taxon>
        <taxon>Bacillati</taxon>
        <taxon>Bacillota</taxon>
        <taxon>Bacilli</taxon>
        <taxon>Lactobacillales</taxon>
        <taxon>Lactobacillaceae</taxon>
        <taxon>Ligilactobacillus</taxon>
    </lineage>
</organism>
<accession>Q1WS97</accession>
<keyword id="KW-1185">Reference proteome</keyword>
<keyword id="KW-0687">Ribonucleoprotein</keyword>
<keyword id="KW-0689">Ribosomal protein</keyword>
<keyword id="KW-0694">RNA-binding</keyword>
<keyword id="KW-0699">rRNA-binding</keyword>
<keyword id="KW-0820">tRNA-binding</keyword>
<proteinExistence type="inferred from homology"/>
<gene>
    <name evidence="1" type="primary">rplP</name>
    <name type="ordered locus">LSL_1428</name>
</gene>
<sequence length="144" mass="16160">MLVPKRVKHRREFRGKMRGEAKGGKEVTFGKYGLKALDSHWITNRQIEAARIAMTRYMKRGGKVWIKIFPHKSYTAKAIGVRMGSGKGAPEGWVAPVKRGKVLFEIDGVSEEVAREALRLASHKLPVKTKFVQREEVGGESNEG</sequence>
<name>RL16_LIGS1</name>
<protein>
    <recommendedName>
        <fullName evidence="1">Large ribosomal subunit protein uL16</fullName>
    </recommendedName>
    <alternativeName>
        <fullName evidence="2">50S ribosomal protein L16</fullName>
    </alternativeName>
</protein>
<comment type="function">
    <text evidence="1">Binds 23S rRNA and is also seen to make contacts with the A and possibly P site tRNAs.</text>
</comment>
<comment type="subunit">
    <text evidence="1">Part of the 50S ribosomal subunit.</text>
</comment>
<comment type="similarity">
    <text evidence="1">Belongs to the universal ribosomal protein uL16 family.</text>
</comment>
<feature type="chain" id="PRO_0000251642" description="Large ribosomal subunit protein uL16">
    <location>
        <begin position="1"/>
        <end position="144"/>
    </location>
</feature>
<reference key="1">
    <citation type="journal article" date="2006" name="Proc. Natl. Acad. Sci. U.S.A.">
        <title>Multireplicon genome architecture of Lactobacillus salivarius.</title>
        <authorList>
            <person name="Claesson M.J."/>
            <person name="Li Y."/>
            <person name="Leahy S."/>
            <person name="Canchaya C."/>
            <person name="van Pijkeren J.P."/>
            <person name="Cerdeno-Tarraga A.M."/>
            <person name="Parkhill J."/>
            <person name="Flynn S."/>
            <person name="O'Sullivan G.C."/>
            <person name="Collins J.K."/>
            <person name="Higgins D."/>
            <person name="Shanahan F."/>
            <person name="Fitzgerald G.F."/>
            <person name="van Sinderen D."/>
            <person name="O'Toole P.W."/>
        </authorList>
    </citation>
    <scope>NUCLEOTIDE SEQUENCE [LARGE SCALE GENOMIC DNA]</scope>
    <source>
        <strain>UCC118</strain>
    </source>
</reference>
<dbReference type="EMBL" id="CP000233">
    <property type="protein sequence ID" value="ABE00232.1"/>
    <property type="molecule type" value="Genomic_DNA"/>
</dbReference>
<dbReference type="RefSeq" id="WP_003701312.1">
    <property type="nucleotide sequence ID" value="NC_007929.1"/>
</dbReference>
<dbReference type="RefSeq" id="YP_536315.1">
    <property type="nucleotide sequence ID" value="NC_007929.1"/>
</dbReference>
<dbReference type="SMR" id="Q1WS97"/>
<dbReference type="STRING" id="362948.LSL_1428"/>
<dbReference type="KEGG" id="lsl:LSL_1428"/>
<dbReference type="PATRIC" id="fig|362948.14.peg.1511"/>
<dbReference type="HOGENOM" id="CLU_078858_2_1_9"/>
<dbReference type="OrthoDB" id="9802589at2"/>
<dbReference type="Proteomes" id="UP000006559">
    <property type="component" value="Chromosome"/>
</dbReference>
<dbReference type="GO" id="GO:0022625">
    <property type="term" value="C:cytosolic large ribosomal subunit"/>
    <property type="evidence" value="ECO:0007669"/>
    <property type="project" value="TreeGrafter"/>
</dbReference>
<dbReference type="GO" id="GO:0019843">
    <property type="term" value="F:rRNA binding"/>
    <property type="evidence" value="ECO:0007669"/>
    <property type="project" value="UniProtKB-UniRule"/>
</dbReference>
<dbReference type="GO" id="GO:0003735">
    <property type="term" value="F:structural constituent of ribosome"/>
    <property type="evidence" value="ECO:0007669"/>
    <property type="project" value="InterPro"/>
</dbReference>
<dbReference type="GO" id="GO:0000049">
    <property type="term" value="F:tRNA binding"/>
    <property type="evidence" value="ECO:0007669"/>
    <property type="project" value="UniProtKB-KW"/>
</dbReference>
<dbReference type="GO" id="GO:0006412">
    <property type="term" value="P:translation"/>
    <property type="evidence" value="ECO:0007669"/>
    <property type="project" value="UniProtKB-UniRule"/>
</dbReference>
<dbReference type="CDD" id="cd01433">
    <property type="entry name" value="Ribosomal_L16_L10e"/>
    <property type="match status" value="1"/>
</dbReference>
<dbReference type="FunFam" id="3.90.1170.10:FF:000001">
    <property type="entry name" value="50S ribosomal protein L16"/>
    <property type="match status" value="1"/>
</dbReference>
<dbReference type="Gene3D" id="3.90.1170.10">
    <property type="entry name" value="Ribosomal protein L10e/L16"/>
    <property type="match status" value="1"/>
</dbReference>
<dbReference type="HAMAP" id="MF_01342">
    <property type="entry name" value="Ribosomal_uL16"/>
    <property type="match status" value="1"/>
</dbReference>
<dbReference type="InterPro" id="IPR047873">
    <property type="entry name" value="Ribosomal_uL16"/>
</dbReference>
<dbReference type="InterPro" id="IPR000114">
    <property type="entry name" value="Ribosomal_uL16_bact-type"/>
</dbReference>
<dbReference type="InterPro" id="IPR020798">
    <property type="entry name" value="Ribosomal_uL16_CS"/>
</dbReference>
<dbReference type="InterPro" id="IPR016180">
    <property type="entry name" value="Ribosomal_uL16_dom"/>
</dbReference>
<dbReference type="InterPro" id="IPR036920">
    <property type="entry name" value="Ribosomal_uL16_sf"/>
</dbReference>
<dbReference type="NCBIfam" id="TIGR01164">
    <property type="entry name" value="rplP_bact"/>
    <property type="match status" value="1"/>
</dbReference>
<dbReference type="PANTHER" id="PTHR12220">
    <property type="entry name" value="50S/60S RIBOSOMAL PROTEIN L16"/>
    <property type="match status" value="1"/>
</dbReference>
<dbReference type="PANTHER" id="PTHR12220:SF13">
    <property type="entry name" value="LARGE RIBOSOMAL SUBUNIT PROTEIN UL16M"/>
    <property type="match status" value="1"/>
</dbReference>
<dbReference type="Pfam" id="PF00252">
    <property type="entry name" value="Ribosomal_L16"/>
    <property type="match status" value="1"/>
</dbReference>
<dbReference type="PRINTS" id="PR00060">
    <property type="entry name" value="RIBOSOMALL16"/>
</dbReference>
<dbReference type="SUPFAM" id="SSF54686">
    <property type="entry name" value="Ribosomal protein L16p/L10e"/>
    <property type="match status" value="1"/>
</dbReference>
<dbReference type="PROSITE" id="PS00586">
    <property type="entry name" value="RIBOSOMAL_L16_1"/>
    <property type="match status" value="1"/>
</dbReference>
<dbReference type="PROSITE" id="PS00701">
    <property type="entry name" value="RIBOSOMAL_L16_2"/>
    <property type="match status" value="1"/>
</dbReference>